<comment type="function">
    <text evidence="1">Modulates transcription in response to changes in cellular NADH/NAD(+) redox state.</text>
</comment>
<comment type="subunit">
    <text evidence="1">Homodimer.</text>
</comment>
<comment type="subcellular location">
    <subcellularLocation>
        <location evidence="1">Cytoplasm</location>
    </subcellularLocation>
</comment>
<comment type="similarity">
    <text evidence="1">Belongs to the transcriptional regulatory Rex family.</text>
</comment>
<organism>
    <name type="scientific">Limosilactobacillus reuteri (strain DSM 20016)</name>
    <name type="common">Lactobacillus reuteri</name>
    <dbReference type="NCBI Taxonomy" id="557436"/>
    <lineage>
        <taxon>Bacteria</taxon>
        <taxon>Bacillati</taxon>
        <taxon>Bacillota</taxon>
        <taxon>Bacilli</taxon>
        <taxon>Lactobacillales</taxon>
        <taxon>Lactobacillaceae</taxon>
        <taxon>Limosilactobacillus</taxon>
    </lineage>
</organism>
<protein>
    <recommendedName>
        <fullName evidence="1">Redox-sensing transcriptional repressor Rex</fullName>
    </recommendedName>
</protein>
<gene>
    <name evidence="1" type="primary">rex</name>
    <name type="ordered locus">Lreu_0352</name>
</gene>
<sequence length="214" mass="23940">MANKKIPRATAKRLPIYFRYLNVLKDANKQRVSSTELSEAVQVDSATIRRDFSYFGELGKRGYGYDVESLLKFFKGILHQDSLVSVALVGVGSLGSALLNFNFHQDTNLRISAAFDTKPEYANTVKSGIPIYPSEDMVKQLKEQQIDVVILTVPGIKAQHVADQLVEAGVKGILNFTPVRLSVPKNVQVQNIDLTNELQTLIYFIKNYTEDSIK</sequence>
<evidence type="ECO:0000255" key="1">
    <source>
        <dbReference type="HAMAP-Rule" id="MF_01131"/>
    </source>
</evidence>
<proteinExistence type="inferred from homology"/>
<name>REX_LIMRD</name>
<feature type="chain" id="PRO_1000065408" description="Redox-sensing transcriptional repressor Rex">
    <location>
        <begin position="1"/>
        <end position="214"/>
    </location>
</feature>
<feature type="DNA-binding region" description="H-T-H motif" evidence="1">
    <location>
        <begin position="16"/>
        <end position="55"/>
    </location>
</feature>
<feature type="binding site" evidence="1">
    <location>
        <begin position="90"/>
        <end position="95"/>
    </location>
    <ligand>
        <name>NAD(+)</name>
        <dbReference type="ChEBI" id="CHEBI:57540"/>
    </ligand>
</feature>
<dbReference type="EMBL" id="CP000705">
    <property type="protein sequence ID" value="ABQ82621.1"/>
    <property type="molecule type" value="Genomic_DNA"/>
</dbReference>
<dbReference type="RefSeq" id="WP_003667422.1">
    <property type="nucleotide sequence ID" value="NC_009513.1"/>
</dbReference>
<dbReference type="SMR" id="A5VIE7"/>
<dbReference type="STRING" id="557436.Lreu_0352"/>
<dbReference type="KEGG" id="lre:Lreu_0352"/>
<dbReference type="PATRIC" id="fig|557436.17.peg.391"/>
<dbReference type="eggNOG" id="COG2344">
    <property type="taxonomic scope" value="Bacteria"/>
</dbReference>
<dbReference type="HOGENOM" id="CLU_061534_1_1_9"/>
<dbReference type="Proteomes" id="UP000001991">
    <property type="component" value="Chromosome"/>
</dbReference>
<dbReference type="GO" id="GO:0005737">
    <property type="term" value="C:cytoplasm"/>
    <property type="evidence" value="ECO:0007669"/>
    <property type="project" value="UniProtKB-SubCell"/>
</dbReference>
<dbReference type="GO" id="GO:0003677">
    <property type="term" value="F:DNA binding"/>
    <property type="evidence" value="ECO:0007669"/>
    <property type="project" value="UniProtKB-UniRule"/>
</dbReference>
<dbReference type="GO" id="GO:0003700">
    <property type="term" value="F:DNA-binding transcription factor activity"/>
    <property type="evidence" value="ECO:0007669"/>
    <property type="project" value="UniProtKB-UniRule"/>
</dbReference>
<dbReference type="GO" id="GO:0045892">
    <property type="term" value="P:negative regulation of DNA-templated transcription"/>
    <property type="evidence" value="ECO:0007669"/>
    <property type="project" value="InterPro"/>
</dbReference>
<dbReference type="GO" id="GO:0051775">
    <property type="term" value="P:response to redox state"/>
    <property type="evidence" value="ECO:0007669"/>
    <property type="project" value="InterPro"/>
</dbReference>
<dbReference type="Gene3D" id="3.40.50.720">
    <property type="entry name" value="NAD(P)-binding Rossmann-like Domain"/>
    <property type="match status" value="1"/>
</dbReference>
<dbReference type="Gene3D" id="1.10.10.10">
    <property type="entry name" value="Winged helix-like DNA-binding domain superfamily/Winged helix DNA-binding domain"/>
    <property type="match status" value="1"/>
</dbReference>
<dbReference type="HAMAP" id="MF_01131">
    <property type="entry name" value="Rex"/>
    <property type="match status" value="1"/>
</dbReference>
<dbReference type="InterPro" id="IPR003781">
    <property type="entry name" value="CoA-bd"/>
</dbReference>
<dbReference type="InterPro" id="IPR036291">
    <property type="entry name" value="NAD(P)-bd_dom_sf"/>
</dbReference>
<dbReference type="InterPro" id="IPR009718">
    <property type="entry name" value="Rex_DNA-bd_C_dom"/>
</dbReference>
<dbReference type="InterPro" id="IPR022876">
    <property type="entry name" value="Tscrpt_rep_Rex"/>
</dbReference>
<dbReference type="InterPro" id="IPR036388">
    <property type="entry name" value="WH-like_DNA-bd_sf"/>
</dbReference>
<dbReference type="InterPro" id="IPR036390">
    <property type="entry name" value="WH_DNA-bd_sf"/>
</dbReference>
<dbReference type="NCBIfam" id="NF003989">
    <property type="entry name" value="PRK05472.1-3"/>
    <property type="match status" value="1"/>
</dbReference>
<dbReference type="NCBIfam" id="NF003991">
    <property type="entry name" value="PRK05472.1-5"/>
    <property type="match status" value="1"/>
</dbReference>
<dbReference type="NCBIfam" id="NF003994">
    <property type="entry name" value="PRK05472.2-3"/>
    <property type="match status" value="1"/>
</dbReference>
<dbReference type="NCBIfam" id="NF003995">
    <property type="entry name" value="PRK05472.2-4"/>
    <property type="match status" value="1"/>
</dbReference>
<dbReference type="NCBIfam" id="NF003996">
    <property type="entry name" value="PRK05472.2-5"/>
    <property type="match status" value="1"/>
</dbReference>
<dbReference type="PANTHER" id="PTHR35786">
    <property type="entry name" value="REDOX-SENSING TRANSCRIPTIONAL REPRESSOR REX"/>
    <property type="match status" value="1"/>
</dbReference>
<dbReference type="PANTHER" id="PTHR35786:SF1">
    <property type="entry name" value="REDOX-SENSING TRANSCRIPTIONAL REPRESSOR REX 1"/>
    <property type="match status" value="1"/>
</dbReference>
<dbReference type="Pfam" id="PF02629">
    <property type="entry name" value="CoA_binding"/>
    <property type="match status" value="1"/>
</dbReference>
<dbReference type="Pfam" id="PF06971">
    <property type="entry name" value="Put_DNA-bind_N"/>
    <property type="match status" value="1"/>
</dbReference>
<dbReference type="SMART" id="SM00881">
    <property type="entry name" value="CoA_binding"/>
    <property type="match status" value="1"/>
</dbReference>
<dbReference type="SUPFAM" id="SSF51735">
    <property type="entry name" value="NAD(P)-binding Rossmann-fold domains"/>
    <property type="match status" value="1"/>
</dbReference>
<dbReference type="SUPFAM" id="SSF46785">
    <property type="entry name" value="Winged helix' DNA-binding domain"/>
    <property type="match status" value="1"/>
</dbReference>
<accession>A5VIE7</accession>
<keyword id="KW-0963">Cytoplasm</keyword>
<keyword id="KW-0238">DNA-binding</keyword>
<keyword id="KW-0520">NAD</keyword>
<keyword id="KW-1185">Reference proteome</keyword>
<keyword id="KW-0678">Repressor</keyword>
<keyword id="KW-0804">Transcription</keyword>
<keyword id="KW-0805">Transcription regulation</keyword>
<reference key="1">
    <citation type="journal article" date="2011" name="PLoS Genet.">
        <title>The evolution of host specialization in the vertebrate gut symbiont Lactobacillus reuteri.</title>
        <authorList>
            <person name="Frese S.A."/>
            <person name="Benson A.K."/>
            <person name="Tannock G.W."/>
            <person name="Loach D.M."/>
            <person name="Kim J."/>
            <person name="Zhang M."/>
            <person name="Oh P.L."/>
            <person name="Heng N.C."/>
            <person name="Patil P.B."/>
            <person name="Juge N."/>
            <person name="Mackenzie D.A."/>
            <person name="Pearson B.M."/>
            <person name="Lapidus A."/>
            <person name="Dalin E."/>
            <person name="Tice H."/>
            <person name="Goltsman E."/>
            <person name="Land M."/>
            <person name="Hauser L."/>
            <person name="Ivanova N."/>
            <person name="Kyrpides N.C."/>
            <person name="Walter J."/>
        </authorList>
    </citation>
    <scope>NUCLEOTIDE SEQUENCE [LARGE SCALE GENOMIC DNA]</scope>
    <source>
        <strain>DSM 20016</strain>
    </source>
</reference>